<evidence type="ECO:0000255" key="1">
    <source>
        <dbReference type="HAMAP-Rule" id="MF_00381"/>
    </source>
</evidence>
<sequence length="94" mass="10546">MTKSELIERLAGQQSHVPTKVVEDAVKEMLEHMAGTLAEGERIEIRGFGSFSLHYRAPRVGRNPKTGAKVELEGKYVPHFKPGKELRDRANIYG</sequence>
<proteinExistence type="inferred from homology"/>
<organism>
    <name type="scientific">Yersinia enterocolitica serotype O:8 / biotype 1B (strain NCTC 13174 / 8081)</name>
    <dbReference type="NCBI Taxonomy" id="393305"/>
    <lineage>
        <taxon>Bacteria</taxon>
        <taxon>Pseudomonadati</taxon>
        <taxon>Pseudomonadota</taxon>
        <taxon>Gammaproteobacteria</taxon>
        <taxon>Enterobacterales</taxon>
        <taxon>Yersiniaceae</taxon>
        <taxon>Yersinia</taxon>
    </lineage>
</organism>
<protein>
    <recommendedName>
        <fullName evidence="1">Integration host factor subunit beta</fullName>
        <shortName evidence="1">IHF-beta</shortName>
    </recommendedName>
</protein>
<name>IHFB_YERE8</name>
<dbReference type="EMBL" id="AM286415">
    <property type="protein sequence ID" value="CAL11620.1"/>
    <property type="molecule type" value="Genomic_DNA"/>
</dbReference>
<dbReference type="RefSeq" id="WP_005159907.1">
    <property type="nucleotide sequence ID" value="NC_008800.1"/>
</dbReference>
<dbReference type="RefSeq" id="YP_001005836.1">
    <property type="nucleotide sequence ID" value="NC_008800.1"/>
</dbReference>
<dbReference type="SMR" id="A1JMJ0"/>
<dbReference type="GeneID" id="93969355"/>
<dbReference type="KEGG" id="yen:YE1541"/>
<dbReference type="PATRIC" id="fig|393305.7.peg.1668"/>
<dbReference type="eggNOG" id="COG0776">
    <property type="taxonomic scope" value="Bacteria"/>
</dbReference>
<dbReference type="HOGENOM" id="CLU_105066_2_0_6"/>
<dbReference type="OrthoDB" id="9804203at2"/>
<dbReference type="Proteomes" id="UP000000642">
    <property type="component" value="Chromosome"/>
</dbReference>
<dbReference type="GO" id="GO:0005694">
    <property type="term" value="C:chromosome"/>
    <property type="evidence" value="ECO:0007669"/>
    <property type="project" value="InterPro"/>
</dbReference>
<dbReference type="GO" id="GO:0005829">
    <property type="term" value="C:cytosol"/>
    <property type="evidence" value="ECO:0007669"/>
    <property type="project" value="TreeGrafter"/>
</dbReference>
<dbReference type="GO" id="GO:0003677">
    <property type="term" value="F:DNA binding"/>
    <property type="evidence" value="ECO:0007669"/>
    <property type="project" value="UniProtKB-UniRule"/>
</dbReference>
<dbReference type="GO" id="GO:0030527">
    <property type="term" value="F:structural constituent of chromatin"/>
    <property type="evidence" value="ECO:0007669"/>
    <property type="project" value="InterPro"/>
</dbReference>
<dbReference type="GO" id="GO:0006310">
    <property type="term" value="P:DNA recombination"/>
    <property type="evidence" value="ECO:0007669"/>
    <property type="project" value="UniProtKB-UniRule"/>
</dbReference>
<dbReference type="GO" id="GO:0006355">
    <property type="term" value="P:regulation of DNA-templated transcription"/>
    <property type="evidence" value="ECO:0007669"/>
    <property type="project" value="UniProtKB-UniRule"/>
</dbReference>
<dbReference type="GO" id="GO:0006417">
    <property type="term" value="P:regulation of translation"/>
    <property type="evidence" value="ECO:0007669"/>
    <property type="project" value="UniProtKB-UniRule"/>
</dbReference>
<dbReference type="CDD" id="cd13836">
    <property type="entry name" value="IHF_B"/>
    <property type="match status" value="1"/>
</dbReference>
<dbReference type="FunFam" id="4.10.520.10:FF:000003">
    <property type="entry name" value="Integration host factor subunit beta"/>
    <property type="match status" value="1"/>
</dbReference>
<dbReference type="Gene3D" id="4.10.520.10">
    <property type="entry name" value="IHF-like DNA-binding proteins"/>
    <property type="match status" value="1"/>
</dbReference>
<dbReference type="HAMAP" id="MF_00381">
    <property type="entry name" value="IHF_beta"/>
    <property type="match status" value="1"/>
</dbReference>
<dbReference type="InterPro" id="IPR000119">
    <property type="entry name" value="Hist_DNA-bd"/>
</dbReference>
<dbReference type="InterPro" id="IPR020816">
    <property type="entry name" value="Histone-like_DNA-bd_CS"/>
</dbReference>
<dbReference type="InterPro" id="IPR010992">
    <property type="entry name" value="IHF-like_DNA-bd_dom_sf"/>
</dbReference>
<dbReference type="InterPro" id="IPR005685">
    <property type="entry name" value="IHF_beta"/>
</dbReference>
<dbReference type="NCBIfam" id="TIGR00988">
    <property type="entry name" value="hip"/>
    <property type="match status" value="1"/>
</dbReference>
<dbReference type="NCBIfam" id="NF001222">
    <property type="entry name" value="PRK00199.1"/>
    <property type="match status" value="1"/>
</dbReference>
<dbReference type="PANTHER" id="PTHR33175">
    <property type="entry name" value="DNA-BINDING PROTEIN HU"/>
    <property type="match status" value="1"/>
</dbReference>
<dbReference type="PANTHER" id="PTHR33175:SF5">
    <property type="entry name" value="INTEGRATION HOST FACTOR SUBUNIT BETA"/>
    <property type="match status" value="1"/>
</dbReference>
<dbReference type="Pfam" id="PF00216">
    <property type="entry name" value="Bac_DNA_binding"/>
    <property type="match status" value="1"/>
</dbReference>
<dbReference type="PRINTS" id="PR01727">
    <property type="entry name" value="DNABINDINGHU"/>
</dbReference>
<dbReference type="SMART" id="SM00411">
    <property type="entry name" value="BHL"/>
    <property type="match status" value="1"/>
</dbReference>
<dbReference type="SUPFAM" id="SSF47729">
    <property type="entry name" value="IHF-like DNA-binding proteins"/>
    <property type="match status" value="1"/>
</dbReference>
<dbReference type="PROSITE" id="PS00045">
    <property type="entry name" value="HISTONE_LIKE"/>
    <property type="match status" value="1"/>
</dbReference>
<accession>A1JMJ0</accession>
<comment type="function">
    <text evidence="1">This protein is one of the two subunits of integration host factor, a specific DNA-binding protein that functions in genetic recombination as well as in transcriptional and translational control.</text>
</comment>
<comment type="subunit">
    <text evidence="1">Heterodimer of an alpha and a beta chain.</text>
</comment>
<comment type="similarity">
    <text evidence="1">Belongs to the bacterial histone-like protein family.</text>
</comment>
<keyword id="KW-0233">DNA recombination</keyword>
<keyword id="KW-0238">DNA-binding</keyword>
<keyword id="KW-0804">Transcription</keyword>
<keyword id="KW-0805">Transcription regulation</keyword>
<keyword id="KW-0810">Translation regulation</keyword>
<gene>
    <name evidence="1" type="primary">ihfB</name>
    <name evidence="1" type="synonym">himD</name>
    <name type="ordered locus">YE1541</name>
</gene>
<feature type="chain" id="PRO_1000060677" description="Integration host factor subunit beta">
    <location>
        <begin position="1"/>
        <end position="94"/>
    </location>
</feature>
<reference key="1">
    <citation type="journal article" date="2006" name="PLoS Genet.">
        <title>The complete genome sequence and comparative genome analysis of the high pathogenicity Yersinia enterocolitica strain 8081.</title>
        <authorList>
            <person name="Thomson N.R."/>
            <person name="Howard S."/>
            <person name="Wren B.W."/>
            <person name="Holden M.T.G."/>
            <person name="Crossman L."/>
            <person name="Challis G.L."/>
            <person name="Churcher C."/>
            <person name="Mungall K."/>
            <person name="Brooks K."/>
            <person name="Chillingworth T."/>
            <person name="Feltwell T."/>
            <person name="Abdellah Z."/>
            <person name="Hauser H."/>
            <person name="Jagels K."/>
            <person name="Maddison M."/>
            <person name="Moule S."/>
            <person name="Sanders M."/>
            <person name="Whitehead S."/>
            <person name="Quail M.A."/>
            <person name="Dougan G."/>
            <person name="Parkhill J."/>
            <person name="Prentice M.B."/>
        </authorList>
    </citation>
    <scope>NUCLEOTIDE SEQUENCE [LARGE SCALE GENOMIC DNA]</scope>
    <source>
        <strain>NCTC 13174 / 8081</strain>
    </source>
</reference>